<accession>A9IW03</accession>
<comment type="subunit">
    <text evidence="1">Part of the 50S ribosomal subunit.</text>
</comment>
<comment type="similarity">
    <text evidence="1">Belongs to the universal ribosomal protein uL30 family.</text>
</comment>
<name>RL30_BART1</name>
<keyword id="KW-0687">Ribonucleoprotein</keyword>
<keyword id="KW-0689">Ribosomal protein</keyword>
<reference key="1">
    <citation type="journal article" date="2007" name="Nat. Genet.">
        <title>Genomic analysis of Bartonella identifies type IV secretion systems as host adaptability factors.</title>
        <authorList>
            <person name="Saenz H.L."/>
            <person name="Engel P."/>
            <person name="Stoeckli M.C."/>
            <person name="Lanz C."/>
            <person name="Raddatz G."/>
            <person name="Vayssier-Taussat M."/>
            <person name="Birtles R."/>
            <person name="Schuster S.C."/>
            <person name="Dehio C."/>
        </authorList>
    </citation>
    <scope>NUCLEOTIDE SEQUENCE [LARGE SCALE GENOMIC DNA]</scope>
    <source>
        <strain>CIP 105476 / IBS 506</strain>
    </source>
</reference>
<proteinExistence type="inferred from homology"/>
<dbReference type="EMBL" id="AM260525">
    <property type="protein sequence ID" value="CAK01846.1"/>
    <property type="molecule type" value="Genomic_DNA"/>
</dbReference>
<dbReference type="RefSeq" id="WP_012231985.1">
    <property type="nucleotide sequence ID" value="NC_010161.1"/>
</dbReference>
<dbReference type="SMR" id="A9IW03"/>
<dbReference type="KEGG" id="btr:BT_1500"/>
<dbReference type="eggNOG" id="COG1841">
    <property type="taxonomic scope" value="Bacteria"/>
</dbReference>
<dbReference type="HOGENOM" id="CLU_131047_1_2_5"/>
<dbReference type="Proteomes" id="UP000001592">
    <property type="component" value="Chromosome"/>
</dbReference>
<dbReference type="GO" id="GO:0015934">
    <property type="term" value="C:large ribosomal subunit"/>
    <property type="evidence" value="ECO:0007669"/>
    <property type="project" value="InterPro"/>
</dbReference>
<dbReference type="GO" id="GO:0003735">
    <property type="term" value="F:structural constituent of ribosome"/>
    <property type="evidence" value="ECO:0007669"/>
    <property type="project" value="InterPro"/>
</dbReference>
<dbReference type="GO" id="GO:0006412">
    <property type="term" value="P:translation"/>
    <property type="evidence" value="ECO:0007669"/>
    <property type="project" value="UniProtKB-UniRule"/>
</dbReference>
<dbReference type="CDD" id="cd01658">
    <property type="entry name" value="Ribosomal_L30"/>
    <property type="match status" value="1"/>
</dbReference>
<dbReference type="Gene3D" id="3.30.1390.20">
    <property type="entry name" value="Ribosomal protein L30, ferredoxin-like fold domain"/>
    <property type="match status" value="1"/>
</dbReference>
<dbReference type="HAMAP" id="MF_01371_B">
    <property type="entry name" value="Ribosomal_uL30_B"/>
    <property type="match status" value="1"/>
</dbReference>
<dbReference type="InterPro" id="IPR036919">
    <property type="entry name" value="Ribo_uL30_ferredoxin-like_sf"/>
</dbReference>
<dbReference type="InterPro" id="IPR005996">
    <property type="entry name" value="Ribosomal_uL30_bac-type"/>
</dbReference>
<dbReference type="InterPro" id="IPR016082">
    <property type="entry name" value="Ribosomal_uL30_ferredoxin-like"/>
</dbReference>
<dbReference type="NCBIfam" id="TIGR01308">
    <property type="entry name" value="rpmD_bact"/>
    <property type="match status" value="1"/>
</dbReference>
<dbReference type="Pfam" id="PF00327">
    <property type="entry name" value="Ribosomal_L30"/>
    <property type="match status" value="1"/>
</dbReference>
<dbReference type="PIRSF" id="PIRSF002211">
    <property type="entry name" value="Ribosomal_L30_bac-type"/>
    <property type="match status" value="1"/>
</dbReference>
<dbReference type="SUPFAM" id="SSF55129">
    <property type="entry name" value="Ribosomal protein L30p/L7e"/>
    <property type="match status" value="1"/>
</dbReference>
<sequence>MVQKKSQSGKTVTVEQIGSPIRNSQIQRATLKGLGLNKMRRRRVLEDTLCVRGMIARVRHLVRVIDED</sequence>
<protein>
    <recommendedName>
        <fullName evidence="1">Large ribosomal subunit protein uL30</fullName>
    </recommendedName>
    <alternativeName>
        <fullName evidence="2">50S ribosomal protein L30</fullName>
    </alternativeName>
</protein>
<evidence type="ECO:0000255" key="1">
    <source>
        <dbReference type="HAMAP-Rule" id="MF_01371"/>
    </source>
</evidence>
<evidence type="ECO:0000305" key="2"/>
<organism>
    <name type="scientific">Bartonella tribocorum (strain CIP 105476 / IBS 506)</name>
    <dbReference type="NCBI Taxonomy" id="382640"/>
    <lineage>
        <taxon>Bacteria</taxon>
        <taxon>Pseudomonadati</taxon>
        <taxon>Pseudomonadota</taxon>
        <taxon>Alphaproteobacteria</taxon>
        <taxon>Hyphomicrobiales</taxon>
        <taxon>Bartonellaceae</taxon>
        <taxon>Bartonella</taxon>
    </lineage>
</organism>
<feature type="chain" id="PRO_1000087241" description="Large ribosomal subunit protein uL30">
    <location>
        <begin position="1"/>
        <end position="68"/>
    </location>
</feature>
<gene>
    <name evidence="1" type="primary">rpmD</name>
    <name type="ordered locus">BT_1500</name>
</gene>